<evidence type="ECO:0000250" key="1">
    <source>
        <dbReference type="UniProtKB" id="Q3URQ0"/>
    </source>
</evidence>
<evidence type="ECO:0000250" key="2">
    <source>
        <dbReference type="UniProtKB" id="Q9NXF1"/>
    </source>
</evidence>
<evidence type="ECO:0000305" key="3"/>
<accession>Q5RDK1</accession>
<sequence>MTKKRKRQDDFQKVKLKVGKKKPKLQNATPTNFKTKTIHLPEQLKEDGTLPTNNRKLNIEDLLSQMHHYNAGVKQSALLGLKDLLSQYPFIIDAHLSNILSEVTAVFTDKDANVRLAAVQLLQFLAPKIRAEQMSPFFPLVSAHLSSAMTHITEGIQEDSLKVLDILLEQYPALITGRSSILLKNFVELISHQQLSKGLINRDRSQSWILSVNPNRRLTSQQWRLKVLVRLSKFLQALADGSSRLRESEGLQEQKENPHATSNSIFINWKEHANDQQHIQVYENGGSQPNVSSQFRLRYLVGGLSGVDEGLSSTENLKGFIEIIIPLLIECWVEAVPPQLATPVGNGIEREPLQVMQQVLNIISLLWKLSKQQDETHKLESWLRKNYLIDFKHHFMSRFPYALKEITKHKRKEPNKSIKHCTVFSNNIDHLLLNLTLSDIMVSLANASTLQKDCSWIEMIRKFVTETLEDGSRLNSKQLNRLLGVSWRLMQIQPNREDTETLIKAVYTLYQQRGLILPVRTLLLKFFSKIYQTEELRSCRFRYRSKVLSRWLAGLPLQLAHLGSRNPELSTQLIDMIHTAAARANKELLKSLQATALRIYDPQEGAVVVLPADPQQRLVQLVYFLPSLPADLLSRLSRCCIMGRLSSSLAAMLIGILHMRSSFSGWKYSAKDWLMSDVDYFSFLFSTLTGFSKEELTRLQSLRGVPHVIQTQLSPVLLYLTDLDQFLHHWDVTEAVFHSLLVIPARSQNFDILQSAISKHLVGLTVIPDSTAGCVFGVICKLLDHTCIVSETLLPFLASCCYSLLYFLLTIEKGEAEHLRKRDKLWGVCVSILALLPRVLRLMLQSLRVNRVGPEELPVVGQLLRLLLQHAPLRTHMLTNAILVQQIIKNITTLKSGSVQEQWLTDLHYCFNVYITGHPQGPSALATVY</sequence>
<comment type="function">
    <text evidence="2">Functions as a component of the Five Friends of Methylated CHTOP (5FMC) complex; the 5FMC complex is recruited to ZNF148 by methylated CHTOP, leading to desumoylation of ZNF148 and subsequent transactivation of ZNF148 target genes. Component of the PELP1 complex involved in the nucleolar steps of 28S rRNA maturation and the subsequent nucleoplasmic transit of the pre-60S ribosomal subunit.</text>
</comment>
<comment type="subunit">
    <text evidence="2">Component of some MLL1/MLL complex, at least composed of the core components KMT2A/MLL1, ASH2L, HCFC1/HCF1, WDR5 and RBBP5, as well as the facultative components BACC1, CHD8, E2F6, HSP70, INO80C, KANSL1, LAS1L, MAX, MCRS1, MGA, KAT8/MOF, PELP1, PHF20, PRP31, RING2, RUVB1/TIP49A, RUVB2/TIP49B, SENP3, TAF1, TAF4, TAF6, TAF7, TAF9 and TEX10. Component of the 5FMC complex, at least composed of PELP1, LAS1L, TEX10, WDR18 and SENP3; the complex interacts with methylated CHTOP and ZNF148. Component of the PELP1 complex, composed of at least PELP1, TEX10 and WDR18. The complex interacts with pre-60S ribosome particles.</text>
</comment>
<comment type="subcellular location">
    <subcellularLocation>
        <location evidence="2">Nucleus</location>
        <location evidence="2">Nucleolus</location>
    </subcellularLocation>
    <subcellularLocation>
        <location evidence="1">Nucleus</location>
        <location evidence="1">Nucleoplasm</location>
    </subcellularLocation>
    <subcellularLocation>
        <location evidence="1">Cytoplasm</location>
    </subcellularLocation>
    <text evidence="1">Mainly found in the nucleoplasm, with low levels detected in the cytoplasmic and chromatin fractions.</text>
</comment>
<comment type="similarity">
    <text evidence="3">Belongs to the IPI1/TEX10 family.</text>
</comment>
<dbReference type="EMBL" id="CR857906">
    <property type="protein sequence ID" value="CAH90156.1"/>
    <property type="molecule type" value="mRNA"/>
</dbReference>
<dbReference type="RefSeq" id="NP_001125045.1">
    <property type="nucleotide sequence ID" value="NM_001131573.1"/>
</dbReference>
<dbReference type="SMR" id="Q5RDK1"/>
<dbReference type="STRING" id="9601.ENSPPYP00000021790"/>
<dbReference type="GeneID" id="100171926"/>
<dbReference type="KEGG" id="pon:100171926"/>
<dbReference type="CTD" id="54881"/>
<dbReference type="eggNOG" id="KOG2149">
    <property type="taxonomic scope" value="Eukaryota"/>
</dbReference>
<dbReference type="InParanoid" id="Q5RDK1"/>
<dbReference type="OrthoDB" id="361362at2759"/>
<dbReference type="Proteomes" id="UP000001595">
    <property type="component" value="Unplaced"/>
</dbReference>
<dbReference type="GO" id="GO:0005737">
    <property type="term" value="C:cytoplasm"/>
    <property type="evidence" value="ECO:0007669"/>
    <property type="project" value="UniProtKB-SubCell"/>
</dbReference>
<dbReference type="GO" id="GO:0071339">
    <property type="term" value="C:MLL1 complex"/>
    <property type="evidence" value="ECO:0000250"/>
    <property type="project" value="UniProtKB"/>
</dbReference>
<dbReference type="GO" id="GO:0005730">
    <property type="term" value="C:nucleolus"/>
    <property type="evidence" value="ECO:0007669"/>
    <property type="project" value="UniProtKB-SubCell"/>
</dbReference>
<dbReference type="FunFam" id="1.25.10.10:FF:000498">
    <property type="entry name" value="testis-expressed sequence 10 protein"/>
    <property type="match status" value="1"/>
</dbReference>
<dbReference type="Gene3D" id="1.25.10.10">
    <property type="entry name" value="Leucine-rich Repeat Variant"/>
    <property type="match status" value="1"/>
</dbReference>
<dbReference type="InterPro" id="IPR011989">
    <property type="entry name" value="ARM-like"/>
</dbReference>
<dbReference type="InterPro" id="IPR016024">
    <property type="entry name" value="ARM-type_fold"/>
</dbReference>
<dbReference type="InterPro" id="IPR021133">
    <property type="entry name" value="HEAT_type_2"/>
</dbReference>
<dbReference type="InterPro" id="IPR024679">
    <property type="entry name" value="Ipi1_N"/>
</dbReference>
<dbReference type="PANTHER" id="PTHR16056">
    <property type="entry name" value="REGULATOR OF MICROTUBULE DYNAMICS PROTEIN"/>
    <property type="match status" value="1"/>
</dbReference>
<dbReference type="PANTHER" id="PTHR16056:SF2">
    <property type="entry name" value="TESTIS-EXPRESSED PROTEIN 10"/>
    <property type="match status" value="1"/>
</dbReference>
<dbReference type="Pfam" id="PF12333">
    <property type="entry name" value="Ipi1_N"/>
    <property type="match status" value="1"/>
</dbReference>
<dbReference type="SUPFAM" id="SSF48371">
    <property type="entry name" value="ARM repeat"/>
    <property type="match status" value="1"/>
</dbReference>
<dbReference type="PROSITE" id="PS50077">
    <property type="entry name" value="HEAT_REPEAT"/>
    <property type="match status" value="1"/>
</dbReference>
<protein>
    <recommendedName>
        <fullName>Testis-expressed protein 10</fullName>
    </recommendedName>
</protein>
<proteinExistence type="evidence at transcript level"/>
<keyword id="KW-0963">Cytoplasm</keyword>
<keyword id="KW-0539">Nucleus</keyword>
<keyword id="KW-0597">Phosphoprotein</keyword>
<keyword id="KW-1185">Reference proteome</keyword>
<gene>
    <name type="primary">TEX10</name>
</gene>
<name>TEX10_PONAB</name>
<feature type="chain" id="PRO_0000072492" description="Testis-expressed protein 10">
    <location>
        <begin position="1"/>
        <end position="929"/>
    </location>
</feature>
<feature type="repeat" description="HEAT">
    <location>
        <begin position="99"/>
        <end position="137"/>
    </location>
</feature>
<feature type="modified residue" description="Phosphothreonine" evidence="2">
    <location>
        <position position="29"/>
    </location>
</feature>
<reference key="1">
    <citation type="submission" date="2004-11" db="EMBL/GenBank/DDBJ databases">
        <authorList>
            <consortium name="The German cDNA consortium"/>
        </authorList>
    </citation>
    <scope>NUCLEOTIDE SEQUENCE [LARGE SCALE MRNA]</scope>
    <source>
        <tissue>Brain cortex</tissue>
    </source>
</reference>
<organism>
    <name type="scientific">Pongo abelii</name>
    <name type="common">Sumatran orangutan</name>
    <name type="synonym">Pongo pygmaeus abelii</name>
    <dbReference type="NCBI Taxonomy" id="9601"/>
    <lineage>
        <taxon>Eukaryota</taxon>
        <taxon>Metazoa</taxon>
        <taxon>Chordata</taxon>
        <taxon>Craniata</taxon>
        <taxon>Vertebrata</taxon>
        <taxon>Euteleostomi</taxon>
        <taxon>Mammalia</taxon>
        <taxon>Eutheria</taxon>
        <taxon>Euarchontoglires</taxon>
        <taxon>Primates</taxon>
        <taxon>Haplorrhini</taxon>
        <taxon>Catarrhini</taxon>
        <taxon>Hominidae</taxon>
        <taxon>Pongo</taxon>
    </lineage>
</organism>